<feature type="chain" id="PRO_0000167036" description="Nicotinate-nucleotide--dimethylbenzimidazole phosphoribosyltransferase">
    <location>
        <begin position="1"/>
        <end position="357"/>
    </location>
</feature>
<feature type="active site" description="Proton acceptor" evidence="1">
    <location>
        <position position="317"/>
    </location>
</feature>
<gene>
    <name evidence="1" type="primary">cobT</name>
    <name type="ordered locus">BH0284</name>
</gene>
<proteinExistence type="inferred from homology"/>
<dbReference type="EC" id="2.4.2.21" evidence="1"/>
<dbReference type="EMBL" id="BA000004">
    <property type="protein sequence ID" value="BAB04003.1"/>
    <property type="molecule type" value="Genomic_DNA"/>
</dbReference>
<dbReference type="PIR" id="D83685">
    <property type="entry name" value="D83685"/>
</dbReference>
<dbReference type="RefSeq" id="WP_010896465.1">
    <property type="nucleotide sequence ID" value="NC_002570.2"/>
</dbReference>
<dbReference type="SMR" id="Q9KG31"/>
<dbReference type="STRING" id="272558.gene:10726137"/>
<dbReference type="KEGG" id="bha:BH0284"/>
<dbReference type="eggNOG" id="COG2038">
    <property type="taxonomic scope" value="Bacteria"/>
</dbReference>
<dbReference type="HOGENOM" id="CLU_002982_0_0_9"/>
<dbReference type="OrthoDB" id="9781491at2"/>
<dbReference type="UniPathway" id="UPA00061">
    <property type="reaction ID" value="UER00516"/>
</dbReference>
<dbReference type="Proteomes" id="UP000001258">
    <property type="component" value="Chromosome"/>
</dbReference>
<dbReference type="GO" id="GO:0008939">
    <property type="term" value="F:nicotinate-nucleotide-dimethylbenzimidazole phosphoribosyltransferase activity"/>
    <property type="evidence" value="ECO:0007669"/>
    <property type="project" value="UniProtKB-UniRule"/>
</dbReference>
<dbReference type="GO" id="GO:0009236">
    <property type="term" value="P:cobalamin biosynthetic process"/>
    <property type="evidence" value="ECO:0007669"/>
    <property type="project" value="UniProtKB-KW"/>
</dbReference>
<dbReference type="CDD" id="cd02439">
    <property type="entry name" value="DMB-PRT_CobT"/>
    <property type="match status" value="1"/>
</dbReference>
<dbReference type="FunFam" id="3.40.50.10210:FF:000001">
    <property type="entry name" value="Nicotinate-nucleotide--dimethylbenzimidazole phosphoribosyltransferase"/>
    <property type="match status" value="1"/>
</dbReference>
<dbReference type="Gene3D" id="1.10.1610.10">
    <property type="match status" value="1"/>
</dbReference>
<dbReference type="Gene3D" id="3.40.50.10210">
    <property type="match status" value="1"/>
</dbReference>
<dbReference type="HAMAP" id="MF_00230">
    <property type="entry name" value="CobT"/>
    <property type="match status" value="1"/>
</dbReference>
<dbReference type="InterPro" id="IPR003200">
    <property type="entry name" value="Nict_dMeBzImd_PRibTrfase"/>
</dbReference>
<dbReference type="InterPro" id="IPR017846">
    <property type="entry name" value="Nict_dMeBzImd_PRibTrfase_bact"/>
</dbReference>
<dbReference type="InterPro" id="IPR023195">
    <property type="entry name" value="Nict_dMeBzImd_PRibTrfase_N"/>
</dbReference>
<dbReference type="InterPro" id="IPR036087">
    <property type="entry name" value="Nict_dMeBzImd_PRibTrfase_sf"/>
</dbReference>
<dbReference type="NCBIfam" id="TIGR03160">
    <property type="entry name" value="cobT_DBIPRT"/>
    <property type="match status" value="1"/>
</dbReference>
<dbReference type="NCBIfam" id="NF000996">
    <property type="entry name" value="PRK00105.1"/>
    <property type="match status" value="1"/>
</dbReference>
<dbReference type="PANTHER" id="PTHR43463">
    <property type="entry name" value="NICOTINATE-NUCLEOTIDE--DIMETHYLBENZIMIDAZOLE PHOSPHORIBOSYLTRANSFERASE"/>
    <property type="match status" value="1"/>
</dbReference>
<dbReference type="PANTHER" id="PTHR43463:SF1">
    <property type="entry name" value="NICOTINATE-NUCLEOTIDE--DIMETHYLBENZIMIDAZOLE PHOSPHORIBOSYLTRANSFERASE"/>
    <property type="match status" value="1"/>
</dbReference>
<dbReference type="Pfam" id="PF02277">
    <property type="entry name" value="DBI_PRT"/>
    <property type="match status" value="1"/>
</dbReference>
<dbReference type="SUPFAM" id="SSF52733">
    <property type="entry name" value="Nicotinate mononucleotide:5,6-dimethylbenzimidazole phosphoribosyltransferase (CobT)"/>
    <property type="match status" value="1"/>
</dbReference>
<name>COBT_HALH5</name>
<comment type="function">
    <text evidence="1">Catalyzes the synthesis of alpha-ribazole-5'-phosphate from nicotinate mononucleotide (NAMN) and 5,6-dimethylbenzimidazole (DMB).</text>
</comment>
<comment type="catalytic activity">
    <reaction evidence="1">
        <text>5,6-dimethylbenzimidazole + nicotinate beta-D-ribonucleotide = alpha-ribazole 5'-phosphate + nicotinate + H(+)</text>
        <dbReference type="Rhea" id="RHEA:11196"/>
        <dbReference type="ChEBI" id="CHEBI:15378"/>
        <dbReference type="ChEBI" id="CHEBI:15890"/>
        <dbReference type="ChEBI" id="CHEBI:32544"/>
        <dbReference type="ChEBI" id="CHEBI:57502"/>
        <dbReference type="ChEBI" id="CHEBI:57918"/>
        <dbReference type="EC" id="2.4.2.21"/>
    </reaction>
</comment>
<comment type="pathway">
    <text evidence="1">Nucleoside biosynthesis; alpha-ribazole biosynthesis; alpha-ribazole from 5,6-dimethylbenzimidazole: step 1/2.</text>
</comment>
<comment type="similarity">
    <text evidence="1">Belongs to the CobT family.</text>
</comment>
<keyword id="KW-0169">Cobalamin biosynthesis</keyword>
<keyword id="KW-0328">Glycosyltransferase</keyword>
<keyword id="KW-1185">Reference proteome</keyword>
<keyword id="KW-0808">Transferase</keyword>
<sequence length="357" mass="36980">MQKVKEMIGSINELDTKAQQQMEQHLNTLTKPLGSLGLLESLAIKIAGITGHTQPEIDPATVIVMVADHGVAAEGVSAYPSEVTQQMVHNFITGGAAINVLSRVSNASVQIVDIGVNGTLQLPGLINKNVRHGTNNMAQGPSMEREEAIAAIEVGIEVAQAAIQNGAKLLALGEMGIGNTTASSAMLAALEQVPVEQIVGFGTGLSHEGKEKKVAVIKRAIEVNQPNAADPIDVLAKVGGLEIAGLAGIVLGAAAWRIPVLVDGFITAVAALTAVRIAPLCVHYLIASHQSVEPGHVCVNKLLGLTPLVNLNLRLGEGSGTAIALPIVRSAIRIAHEMATFEQAGVSGAIEDVGKEK</sequence>
<organism>
    <name type="scientific">Halalkalibacterium halodurans (strain ATCC BAA-125 / DSM 18197 / FERM 7344 / JCM 9153 / C-125)</name>
    <name type="common">Bacillus halodurans</name>
    <dbReference type="NCBI Taxonomy" id="272558"/>
    <lineage>
        <taxon>Bacteria</taxon>
        <taxon>Bacillati</taxon>
        <taxon>Bacillota</taxon>
        <taxon>Bacilli</taxon>
        <taxon>Bacillales</taxon>
        <taxon>Bacillaceae</taxon>
        <taxon>Halalkalibacterium (ex Joshi et al. 2022)</taxon>
    </lineage>
</organism>
<protein>
    <recommendedName>
        <fullName evidence="1">Nicotinate-nucleotide--dimethylbenzimidazole phosphoribosyltransferase</fullName>
        <shortName evidence="1">NN:DBI PRT</shortName>
        <ecNumber evidence="1">2.4.2.21</ecNumber>
    </recommendedName>
    <alternativeName>
        <fullName evidence="1">N(1)-alpha-phosphoribosyltransferase</fullName>
    </alternativeName>
</protein>
<accession>Q9KG31</accession>
<reference key="1">
    <citation type="journal article" date="2000" name="Nucleic Acids Res.">
        <title>Complete genome sequence of the alkaliphilic bacterium Bacillus halodurans and genomic sequence comparison with Bacillus subtilis.</title>
        <authorList>
            <person name="Takami H."/>
            <person name="Nakasone K."/>
            <person name="Takaki Y."/>
            <person name="Maeno G."/>
            <person name="Sasaki R."/>
            <person name="Masui N."/>
            <person name="Fuji F."/>
            <person name="Hirama C."/>
            <person name="Nakamura Y."/>
            <person name="Ogasawara N."/>
            <person name="Kuhara S."/>
            <person name="Horikoshi K."/>
        </authorList>
    </citation>
    <scope>NUCLEOTIDE SEQUENCE [LARGE SCALE GENOMIC DNA]</scope>
    <source>
        <strain>ATCC BAA-125 / DSM 18197 / FERM 7344 / JCM 9153 / C-125</strain>
    </source>
</reference>
<evidence type="ECO:0000255" key="1">
    <source>
        <dbReference type="HAMAP-Rule" id="MF_00230"/>
    </source>
</evidence>